<reference key="1">
    <citation type="submission" date="2009-01" db="EMBL/GenBank/DDBJ databases">
        <title>Complete sequence of chromosome of Methylobacterium nodulans ORS 2060.</title>
        <authorList>
            <consortium name="US DOE Joint Genome Institute"/>
            <person name="Lucas S."/>
            <person name="Copeland A."/>
            <person name="Lapidus A."/>
            <person name="Glavina del Rio T."/>
            <person name="Dalin E."/>
            <person name="Tice H."/>
            <person name="Bruce D."/>
            <person name="Goodwin L."/>
            <person name="Pitluck S."/>
            <person name="Sims D."/>
            <person name="Brettin T."/>
            <person name="Detter J.C."/>
            <person name="Han C."/>
            <person name="Larimer F."/>
            <person name="Land M."/>
            <person name="Hauser L."/>
            <person name="Kyrpides N."/>
            <person name="Ivanova N."/>
            <person name="Marx C.J."/>
            <person name="Richardson P."/>
        </authorList>
    </citation>
    <scope>NUCLEOTIDE SEQUENCE [LARGE SCALE GENOMIC DNA]</scope>
    <source>
        <strain>LMG 21967 / CNCM I-2342 / ORS 2060</strain>
    </source>
</reference>
<comment type="function">
    <text evidence="1">Catalyzes the reductive methylation of 2'-deoxyuridine-5'-monophosphate (dUMP) to 2'-deoxythymidine-5'-monophosphate (dTMP) while utilizing 5,10-methylenetetrahydrofolate (mTHF) as the methyl donor and reductant in the reaction, yielding dihydrofolate (DHF) as a by-product. This enzymatic reaction provides an intracellular de novo source of dTMP, an essential precursor for DNA biosynthesis.</text>
</comment>
<comment type="catalytic activity">
    <reaction evidence="1">
        <text>dUMP + (6R)-5,10-methylene-5,6,7,8-tetrahydrofolate = 7,8-dihydrofolate + dTMP</text>
        <dbReference type="Rhea" id="RHEA:12104"/>
        <dbReference type="ChEBI" id="CHEBI:15636"/>
        <dbReference type="ChEBI" id="CHEBI:57451"/>
        <dbReference type="ChEBI" id="CHEBI:63528"/>
        <dbReference type="ChEBI" id="CHEBI:246422"/>
        <dbReference type="EC" id="2.1.1.45"/>
    </reaction>
</comment>
<comment type="pathway">
    <text evidence="1">Pyrimidine metabolism; dTTP biosynthesis.</text>
</comment>
<comment type="subunit">
    <text evidence="1">Homodimer.</text>
</comment>
<comment type="subcellular location">
    <subcellularLocation>
        <location evidence="1">Cytoplasm</location>
    </subcellularLocation>
</comment>
<comment type="similarity">
    <text evidence="1">Belongs to the thymidylate synthase family. Bacterial-type ThyA subfamily.</text>
</comment>
<protein>
    <recommendedName>
        <fullName evidence="1">Thymidylate synthase</fullName>
        <shortName evidence="1">TS</shortName>
        <shortName evidence="1">TSase</shortName>
        <ecNumber evidence="1">2.1.1.45</ecNumber>
    </recommendedName>
</protein>
<keyword id="KW-0963">Cytoplasm</keyword>
<keyword id="KW-0489">Methyltransferase</keyword>
<keyword id="KW-0545">Nucleotide biosynthesis</keyword>
<keyword id="KW-1185">Reference proteome</keyword>
<keyword id="KW-0808">Transferase</keyword>
<feature type="chain" id="PRO_1000197252" description="Thymidylate synthase">
    <location>
        <begin position="1"/>
        <end position="264"/>
    </location>
</feature>
<feature type="active site" description="Nucleophile" evidence="1">
    <location>
        <position position="146"/>
    </location>
</feature>
<feature type="binding site" description="in other chain" evidence="1">
    <location>
        <position position="21"/>
    </location>
    <ligand>
        <name>dUMP</name>
        <dbReference type="ChEBI" id="CHEBI:246422"/>
        <note>ligand shared between dimeric partners</note>
    </ligand>
</feature>
<feature type="binding site" evidence="1">
    <location>
        <position position="51"/>
    </location>
    <ligand>
        <name>(6R)-5,10-methylene-5,6,7,8-tetrahydrofolate</name>
        <dbReference type="ChEBI" id="CHEBI:15636"/>
    </ligand>
</feature>
<feature type="binding site" evidence="1">
    <location>
        <begin position="126"/>
        <end position="127"/>
    </location>
    <ligand>
        <name>dUMP</name>
        <dbReference type="ChEBI" id="CHEBI:246422"/>
        <note>ligand shared between dimeric partners</note>
    </ligand>
</feature>
<feature type="binding site" description="in other chain" evidence="1">
    <location>
        <begin position="166"/>
        <end position="169"/>
    </location>
    <ligand>
        <name>dUMP</name>
        <dbReference type="ChEBI" id="CHEBI:246422"/>
        <note>ligand shared between dimeric partners</note>
    </ligand>
</feature>
<feature type="binding site" evidence="1">
    <location>
        <position position="169"/>
    </location>
    <ligand>
        <name>(6R)-5,10-methylene-5,6,7,8-tetrahydrofolate</name>
        <dbReference type="ChEBI" id="CHEBI:15636"/>
    </ligand>
</feature>
<feature type="binding site" description="in other chain" evidence="1">
    <location>
        <position position="177"/>
    </location>
    <ligand>
        <name>dUMP</name>
        <dbReference type="ChEBI" id="CHEBI:246422"/>
        <note>ligand shared between dimeric partners</note>
    </ligand>
</feature>
<feature type="binding site" description="in other chain" evidence="1">
    <location>
        <begin position="207"/>
        <end position="209"/>
    </location>
    <ligand>
        <name>dUMP</name>
        <dbReference type="ChEBI" id="CHEBI:246422"/>
        <note>ligand shared between dimeric partners</note>
    </ligand>
</feature>
<feature type="binding site" evidence="1">
    <location>
        <position position="263"/>
    </location>
    <ligand>
        <name>(6R)-5,10-methylene-5,6,7,8-tetrahydrofolate</name>
        <dbReference type="ChEBI" id="CHEBI:15636"/>
    </ligand>
</feature>
<proteinExistence type="inferred from homology"/>
<gene>
    <name evidence="1" type="primary">thyA</name>
    <name type="ordered locus">Mnod_0699</name>
</gene>
<evidence type="ECO:0000255" key="1">
    <source>
        <dbReference type="HAMAP-Rule" id="MF_00008"/>
    </source>
</evidence>
<dbReference type="EC" id="2.1.1.45" evidence="1"/>
<dbReference type="EMBL" id="CP001349">
    <property type="protein sequence ID" value="ACL55731.1"/>
    <property type="molecule type" value="Genomic_DNA"/>
</dbReference>
<dbReference type="RefSeq" id="WP_015927436.1">
    <property type="nucleotide sequence ID" value="NC_011894.1"/>
</dbReference>
<dbReference type="SMR" id="B8IF20"/>
<dbReference type="STRING" id="460265.Mnod_0699"/>
<dbReference type="KEGG" id="mno:Mnod_0699"/>
<dbReference type="eggNOG" id="COG0207">
    <property type="taxonomic scope" value="Bacteria"/>
</dbReference>
<dbReference type="HOGENOM" id="CLU_021669_0_0_5"/>
<dbReference type="OrthoDB" id="9774633at2"/>
<dbReference type="UniPathway" id="UPA00575"/>
<dbReference type="Proteomes" id="UP000008207">
    <property type="component" value="Chromosome"/>
</dbReference>
<dbReference type="GO" id="GO:0005829">
    <property type="term" value="C:cytosol"/>
    <property type="evidence" value="ECO:0007669"/>
    <property type="project" value="TreeGrafter"/>
</dbReference>
<dbReference type="GO" id="GO:0004799">
    <property type="term" value="F:thymidylate synthase activity"/>
    <property type="evidence" value="ECO:0007669"/>
    <property type="project" value="UniProtKB-UniRule"/>
</dbReference>
<dbReference type="GO" id="GO:0006231">
    <property type="term" value="P:dTMP biosynthetic process"/>
    <property type="evidence" value="ECO:0007669"/>
    <property type="project" value="UniProtKB-UniRule"/>
</dbReference>
<dbReference type="GO" id="GO:0006235">
    <property type="term" value="P:dTTP biosynthetic process"/>
    <property type="evidence" value="ECO:0007669"/>
    <property type="project" value="UniProtKB-UniRule"/>
</dbReference>
<dbReference type="GO" id="GO:0032259">
    <property type="term" value="P:methylation"/>
    <property type="evidence" value="ECO:0007669"/>
    <property type="project" value="UniProtKB-KW"/>
</dbReference>
<dbReference type="CDD" id="cd00351">
    <property type="entry name" value="TS_Pyrimidine_HMase"/>
    <property type="match status" value="1"/>
</dbReference>
<dbReference type="FunFam" id="3.30.572.10:FF:000001">
    <property type="entry name" value="Thymidylate synthase"/>
    <property type="match status" value="1"/>
</dbReference>
<dbReference type="Gene3D" id="3.30.572.10">
    <property type="entry name" value="Thymidylate synthase/dCMP hydroxymethylase domain"/>
    <property type="match status" value="1"/>
</dbReference>
<dbReference type="HAMAP" id="MF_00008">
    <property type="entry name" value="Thymidy_synth_bact"/>
    <property type="match status" value="1"/>
</dbReference>
<dbReference type="InterPro" id="IPR045097">
    <property type="entry name" value="Thymidate_synth/dCMP_Mease"/>
</dbReference>
<dbReference type="InterPro" id="IPR023451">
    <property type="entry name" value="Thymidate_synth/dCMP_Mease_dom"/>
</dbReference>
<dbReference type="InterPro" id="IPR036926">
    <property type="entry name" value="Thymidate_synth/dCMP_Mease_sf"/>
</dbReference>
<dbReference type="InterPro" id="IPR000398">
    <property type="entry name" value="Thymidylate_synthase"/>
</dbReference>
<dbReference type="NCBIfam" id="NF002497">
    <property type="entry name" value="PRK01827.1-3"/>
    <property type="match status" value="1"/>
</dbReference>
<dbReference type="NCBIfam" id="NF002499">
    <property type="entry name" value="PRK01827.1-5"/>
    <property type="match status" value="1"/>
</dbReference>
<dbReference type="NCBIfam" id="TIGR03284">
    <property type="entry name" value="thym_sym"/>
    <property type="match status" value="2"/>
</dbReference>
<dbReference type="PANTHER" id="PTHR11548:SF9">
    <property type="entry name" value="THYMIDYLATE SYNTHASE"/>
    <property type="match status" value="1"/>
</dbReference>
<dbReference type="PANTHER" id="PTHR11548">
    <property type="entry name" value="THYMIDYLATE SYNTHASE 1"/>
    <property type="match status" value="1"/>
</dbReference>
<dbReference type="Pfam" id="PF00303">
    <property type="entry name" value="Thymidylat_synt"/>
    <property type="match status" value="1"/>
</dbReference>
<dbReference type="PRINTS" id="PR00108">
    <property type="entry name" value="THYMDSNTHASE"/>
</dbReference>
<dbReference type="SUPFAM" id="SSF55831">
    <property type="entry name" value="Thymidylate synthase/dCMP hydroxymethylase"/>
    <property type="match status" value="1"/>
</dbReference>
<organism>
    <name type="scientific">Methylobacterium nodulans (strain LMG 21967 / CNCM I-2342 / ORS 2060)</name>
    <dbReference type="NCBI Taxonomy" id="460265"/>
    <lineage>
        <taxon>Bacteria</taxon>
        <taxon>Pseudomonadati</taxon>
        <taxon>Pseudomonadota</taxon>
        <taxon>Alphaproteobacteria</taxon>
        <taxon>Hyphomicrobiales</taxon>
        <taxon>Methylobacteriaceae</taxon>
        <taxon>Methylobacterium</taxon>
    </lineage>
</organism>
<sequence>MRAYHDLLRRILDDGVAKHDRTGTGTLSVFGHQMRFDLAEGFPLVTTKRLHLKSIIHELLWFLAGDTNVAYLQSNGVTIWDEWADEHGDLGPVYGRQWRSWAKPDGGSVDQIAWVLDEIRRNPDSRRLVVSAWNPADLDRMALAPCHCLFQFYIAERRLSCQLYQRSADAFLGVPFNIASYALLTAMMAHVLDLEPGDFVHTLGDAHLYSNHVAQARQQLARDERPLPRLRLNPEVRSLFDFRYDDVVIEGYDPHPAIRAPVAV</sequence>
<accession>B8IF20</accession>
<name>TYSY_METNO</name>